<proteinExistence type="inferred from homology"/>
<sequence>MTRVISGEPQHGDLAPADRALRPQTLAEFVGQEQAKGNLRVFIEAAKGRGEALDHVLLFGPPGLGKTTLAQIVARELGVNFRATSGPVLNKPGDLAAILTNLEANDVLFIDEIHRLSSNVEEILYPAMEDHVLDLVIGEGPSARSIRIDLAPFTLVAATTRAGMLATPLRDRFGIPIRLEFYTPAELRHVLQHAARKMGAPLTDDGADEIAKRARGTPRVAGRLLRRVRDFATADGADRIDRKAAAMALARLEVDESGLDSLDRRYLRAMIENYGGGPVGVETIAYAIAEARDAVEDVIEPYLMQQGFIQRTPRGRMACGKAYLHLGLTPPAAPPGQAQGALFDEG</sequence>
<accession>B8H454</accession>
<keyword id="KW-0067">ATP-binding</keyword>
<keyword id="KW-0963">Cytoplasm</keyword>
<keyword id="KW-0227">DNA damage</keyword>
<keyword id="KW-0233">DNA recombination</keyword>
<keyword id="KW-0234">DNA repair</keyword>
<keyword id="KW-0238">DNA-binding</keyword>
<keyword id="KW-0378">Hydrolase</keyword>
<keyword id="KW-0547">Nucleotide-binding</keyword>
<keyword id="KW-1185">Reference proteome</keyword>
<gene>
    <name evidence="1" type="primary">ruvB</name>
    <name type="ordered locus">CCNA_03344</name>
</gene>
<evidence type="ECO:0000255" key="1">
    <source>
        <dbReference type="HAMAP-Rule" id="MF_00016"/>
    </source>
</evidence>
<reference key="1">
    <citation type="journal article" date="2010" name="J. Bacteriol.">
        <title>The genetic basis of laboratory adaptation in Caulobacter crescentus.</title>
        <authorList>
            <person name="Marks M.E."/>
            <person name="Castro-Rojas C.M."/>
            <person name="Teiling C."/>
            <person name="Du L."/>
            <person name="Kapatral V."/>
            <person name="Walunas T.L."/>
            <person name="Crosson S."/>
        </authorList>
    </citation>
    <scope>NUCLEOTIDE SEQUENCE [LARGE SCALE GENOMIC DNA]</scope>
    <source>
        <strain>NA1000 / CB15N</strain>
    </source>
</reference>
<dbReference type="EC" id="3.6.4.-" evidence="1"/>
<dbReference type="EMBL" id="CP001340">
    <property type="protein sequence ID" value="ACL96808.1"/>
    <property type="molecule type" value="Genomic_DNA"/>
</dbReference>
<dbReference type="RefSeq" id="WP_010921069.1">
    <property type="nucleotide sequence ID" value="NC_011916.1"/>
</dbReference>
<dbReference type="RefSeq" id="YP_002518716.1">
    <property type="nucleotide sequence ID" value="NC_011916.1"/>
</dbReference>
<dbReference type="SMR" id="B8H454"/>
<dbReference type="GeneID" id="7330368"/>
<dbReference type="KEGG" id="ccs:CCNA_03344"/>
<dbReference type="PATRIC" id="fig|565050.3.peg.3259"/>
<dbReference type="HOGENOM" id="CLU_055599_1_0_5"/>
<dbReference type="OrthoDB" id="9804478at2"/>
<dbReference type="PhylomeDB" id="B8H454"/>
<dbReference type="Proteomes" id="UP000001364">
    <property type="component" value="Chromosome"/>
</dbReference>
<dbReference type="GO" id="GO:0005737">
    <property type="term" value="C:cytoplasm"/>
    <property type="evidence" value="ECO:0007669"/>
    <property type="project" value="UniProtKB-SubCell"/>
</dbReference>
<dbReference type="GO" id="GO:0048476">
    <property type="term" value="C:Holliday junction resolvase complex"/>
    <property type="evidence" value="ECO:0007669"/>
    <property type="project" value="UniProtKB-UniRule"/>
</dbReference>
<dbReference type="GO" id="GO:0005524">
    <property type="term" value="F:ATP binding"/>
    <property type="evidence" value="ECO:0007669"/>
    <property type="project" value="UniProtKB-UniRule"/>
</dbReference>
<dbReference type="GO" id="GO:0016887">
    <property type="term" value="F:ATP hydrolysis activity"/>
    <property type="evidence" value="ECO:0007669"/>
    <property type="project" value="InterPro"/>
</dbReference>
<dbReference type="GO" id="GO:0000400">
    <property type="term" value="F:four-way junction DNA binding"/>
    <property type="evidence" value="ECO:0007669"/>
    <property type="project" value="UniProtKB-UniRule"/>
</dbReference>
<dbReference type="GO" id="GO:0009378">
    <property type="term" value="F:four-way junction helicase activity"/>
    <property type="evidence" value="ECO:0007669"/>
    <property type="project" value="InterPro"/>
</dbReference>
<dbReference type="GO" id="GO:0006310">
    <property type="term" value="P:DNA recombination"/>
    <property type="evidence" value="ECO:0007669"/>
    <property type="project" value="UniProtKB-UniRule"/>
</dbReference>
<dbReference type="GO" id="GO:0006281">
    <property type="term" value="P:DNA repair"/>
    <property type="evidence" value="ECO:0007669"/>
    <property type="project" value="UniProtKB-UniRule"/>
</dbReference>
<dbReference type="CDD" id="cd00009">
    <property type="entry name" value="AAA"/>
    <property type="match status" value="1"/>
</dbReference>
<dbReference type="FunFam" id="1.10.10.10:FF:000086">
    <property type="entry name" value="Holliday junction ATP-dependent DNA helicase RuvB"/>
    <property type="match status" value="1"/>
</dbReference>
<dbReference type="FunFam" id="3.40.50.300:FF:000073">
    <property type="entry name" value="Holliday junction ATP-dependent DNA helicase RuvB"/>
    <property type="match status" value="1"/>
</dbReference>
<dbReference type="Gene3D" id="1.10.8.60">
    <property type="match status" value="1"/>
</dbReference>
<dbReference type="Gene3D" id="3.40.50.300">
    <property type="entry name" value="P-loop containing nucleotide triphosphate hydrolases"/>
    <property type="match status" value="1"/>
</dbReference>
<dbReference type="Gene3D" id="1.10.10.10">
    <property type="entry name" value="Winged helix-like DNA-binding domain superfamily/Winged helix DNA-binding domain"/>
    <property type="match status" value="1"/>
</dbReference>
<dbReference type="HAMAP" id="MF_00016">
    <property type="entry name" value="DNA_HJ_migration_RuvB"/>
    <property type="match status" value="1"/>
</dbReference>
<dbReference type="InterPro" id="IPR003593">
    <property type="entry name" value="AAA+_ATPase"/>
</dbReference>
<dbReference type="InterPro" id="IPR041445">
    <property type="entry name" value="AAA_lid_4"/>
</dbReference>
<dbReference type="InterPro" id="IPR004605">
    <property type="entry name" value="DNA_helicase_Holl-junc_RuvB"/>
</dbReference>
<dbReference type="InterPro" id="IPR027417">
    <property type="entry name" value="P-loop_NTPase"/>
</dbReference>
<dbReference type="InterPro" id="IPR008824">
    <property type="entry name" value="RuvB-like_N"/>
</dbReference>
<dbReference type="InterPro" id="IPR008823">
    <property type="entry name" value="RuvB_C"/>
</dbReference>
<dbReference type="InterPro" id="IPR036388">
    <property type="entry name" value="WH-like_DNA-bd_sf"/>
</dbReference>
<dbReference type="InterPro" id="IPR036390">
    <property type="entry name" value="WH_DNA-bd_sf"/>
</dbReference>
<dbReference type="NCBIfam" id="NF000868">
    <property type="entry name" value="PRK00080.1"/>
    <property type="match status" value="1"/>
</dbReference>
<dbReference type="NCBIfam" id="TIGR00635">
    <property type="entry name" value="ruvB"/>
    <property type="match status" value="1"/>
</dbReference>
<dbReference type="PANTHER" id="PTHR42848">
    <property type="match status" value="1"/>
</dbReference>
<dbReference type="PANTHER" id="PTHR42848:SF1">
    <property type="entry name" value="HOLLIDAY JUNCTION BRANCH MIGRATION COMPLEX SUBUNIT RUVB"/>
    <property type="match status" value="1"/>
</dbReference>
<dbReference type="Pfam" id="PF17864">
    <property type="entry name" value="AAA_lid_4"/>
    <property type="match status" value="1"/>
</dbReference>
<dbReference type="Pfam" id="PF05491">
    <property type="entry name" value="RuvB_C"/>
    <property type="match status" value="1"/>
</dbReference>
<dbReference type="Pfam" id="PF05496">
    <property type="entry name" value="RuvB_N"/>
    <property type="match status" value="1"/>
</dbReference>
<dbReference type="SMART" id="SM00382">
    <property type="entry name" value="AAA"/>
    <property type="match status" value="1"/>
</dbReference>
<dbReference type="SUPFAM" id="SSF52540">
    <property type="entry name" value="P-loop containing nucleoside triphosphate hydrolases"/>
    <property type="match status" value="1"/>
</dbReference>
<dbReference type="SUPFAM" id="SSF46785">
    <property type="entry name" value="Winged helix' DNA-binding domain"/>
    <property type="match status" value="1"/>
</dbReference>
<protein>
    <recommendedName>
        <fullName evidence="1">Holliday junction branch migration complex subunit RuvB</fullName>
        <ecNumber evidence="1">3.6.4.-</ecNumber>
    </recommendedName>
</protein>
<name>RUVB_CAUVN</name>
<feature type="chain" id="PRO_1000195209" description="Holliday junction branch migration complex subunit RuvB">
    <location>
        <begin position="1"/>
        <end position="346"/>
    </location>
</feature>
<feature type="region of interest" description="Large ATPase domain (RuvB-L)" evidence="1">
    <location>
        <begin position="1"/>
        <end position="182"/>
    </location>
</feature>
<feature type="region of interest" description="Small ATPAse domain (RuvB-S)" evidence="1">
    <location>
        <begin position="183"/>
        <end position="253"/>
    </location>
</feature>
<feature type="region of interest" description="Head domain (RuvB-H)" evidence="1">
    <location>
        <begin position="256"/>
        <end position="346"/>
    </location>
</feature>
<feature type="binding site" evidence="1">
    <location>
        <position position="21"/>
    </location>
    <ligand>
        <name>ATP</name>
        <dbReference type="ChEBI" id="CHEBI:30616"/>
    </ligand>
</feature>
<feature type="binding site" evidence="1">
    <location>
        <position position="22"/>
    </location>
    <ligand>
        <name>ATP</name>
        <dbReference type="ChEBI" id="CHEBI:30616"/>
    </ligand>
</feature>
<feature type="binding site" evidence="1">
    <location>
        <position position="63"/>
    </location>
    <ligand>
        <name>ATP</name>
        <dbReference type="ChEBI" id="CHEBI:30616"/>
    </ligand>
</feature>
<feature type="binding site" evidence="1">
    <location>
        <position position="66"/>
    </location>
    <ligand>
        <name>ATP</name>
        <dbReference type="ChEBI" id="CHEBI:30616"/>
    </ligand>
</feature>
<feature type="binding site" evidence="1">
    <location>
        <position position="67"/>
    </location>
    <ligand>
        <name>ATP</name>
        <dbReference type="ChEBI" id="CHEBI:30616"/>
    </ligand>
</feature>
<feature type="binding site" evidence="1">
    <location>
        <position position="67"/>
    </location>
    <ligand>
        <name>Mg(2+)</name>
        <dbReference type="ChEBI" id="CHEBI:18420"/>
    </ligand>
</feature>
<feature type="binding site" evidence="1">
    <location>
        <position position="68"/>
    </location>
    <ligand>
        <name>ATP</name>
        <dbReference type="ChEBI" id="CHEBI:30616"/>
    </ligand>
</feature>
<feature type="binding site" evidence="1">
    <location>
        <position position="172"/>
    </location>
    <ligand>
        <name>ATP</name>
        <dbReference type="ChEBI" id="CHEBI:30616"/>
    </ligand>
</feature>
<feature type="binding site" evidence="1">
    <location>
        <position position="182"/>
    </location>
    <ligand>
        <name>ATP</name>
        <dbReference type="ChEBI" id="CHEBI:30616"/>
    </ligand>
</feature>
<feature type="binding site" evidence="1">
    <location>
        <position position="219"/>
    </location>
    <ligand>
        <name>ATP</name>
        <dbReference type="ChEBI" id="CHEBI:30616"/>
    </ligand>
</feature>
<feature type="binding site" evidence="1">
    <location>
        <position position="292"/>
    </location>
    <ligand>
        <name>DNA</name>
        <dbReference type="ChEBI" id="CHEBI:16991"/>
    </ligand>
</feature>
<feature type="binding site" evidence="1">
    <location>
        <position position="311"/>
    </location>
    <ligand>
        <name>DNA</name>
        <dbReference type="ChEBI" id="CHEBI:16991"/>
    </ligand>
</feature>
<feature type="binding site" evidence="1">
    <location>
        <position position="316"/>
    </location>
    <ligand>
        <name>DNA</name>
        <dbReference type="ChEBI" id="CHEBI:16991"/>
    </ligand>
</feature>
<comment type="function">
    <text evidence="1">The RuvA-RuvB-RuvC complex processes Holliday junction (HJ) DNA during genetic recombination and DNA repair, while the RuvA-RuvB complex plays an important role in the rescue of blocked DNA replication forks via replication fork reversal (RFR). RuvA specifically binds to HJ cruciform DNA, conferring on it an open structure. The RuvB hexamer acts as an ATP-dependent pump, pulling dsDNA into and through the RuvAB complex. RuvB forms 2 homohexamers on either side of HJ DNA bound by 1 or 2 RuvA tetramers; 4 subunits per hexamer contact DNA at a time. Coordinated motions by a converter formed by DNA-disengaged RuvB subunits stimulates ATP hydrolysis and nucleotide exchange. Immobilization of the converter enables RuvB to convert the ATP-contained energy into a lever motion, pulling 2 nucleotides of DNA out of the RuvA tetramer per ATP hydrolyzed, thus driving DNA branch migration. The RuvB motors rotate together with the DNA substrate, which together with the progressing nucleotide cycle form the mechanistic basis for DNA recombination by continuous HJ branch migration. Branch migration allows RuvC to scan DNA until it finds its consensus sequence, where it cleaves and resolves cruciform DNA.</text>
</comment>
<comment type="catalytic activity">
    <reaction evidence="1">
        <text>ATP + H2O = ADP + phosphate + H(+)</text>
        <dbReference type="Rhea" id="RHEA:13065"/>
        <dbReference type="ChEBI" id="CHEBI:15377"/>
        <dbReference type="ChEBI" id="CHEBI:15378"/>
        <dbReference type="ChEBI" id="CHEBI:30616"/>
        <dbReference type="ChEBI" id="CHEBI:43474"/>
        <dbReference type="ChEBI" id="CHEBI:456216"/>
    </reaction>
</comment>
<comment type="subunit">
    <text evidence="1">Homohexamer. Forms an RuvA(8)-RuvB(12)-Holliday junction (HJ) complex. HJ DNA is sandwiched between 2 RuvA tetramers; dsDNA enters through RuvA and exits via RuvB. An RuvB hexamer assembles on each DNA strand where it exits the tetramer. Each RuvB hexamer is contacted by two RuvA subunits (via domain III) on 2 adjacent RuvB subunits; this complex drives branch migration. In the full resolvosome a probable DNA-RuvA(4)-RuvB(12)-RuvC(2) complex forms which resolves the HJ.</text>
</comment>
<comment type="subcellular location">
    <subcellularLocation>
        <location evidence="1">Cytoplasm</location>
    </subcellularLocation>
</comment>
<comment type="domain">
    <text evidence="1">Has 3 domains, the large (RuvB-L) and small ATPase (RuvB-S) domains and the C-terminal head (RuvB-H) domain. The head domain binds DNA, while the ATPase domains jointly bind ATP, ADP or are empty depending on the state of the subunit in the translocation cycle. During a single DNA translocation step the structure of each domain remains the same, but their relative positions change.</text>
</comment>
<comment type="similarity">
    <text evidence="1">Belongs to the RuvB family.</text>
</comment>
<organism>
    <name type="scientific">Caulobacter vibrioides (strain NA1000 / CB15N)</name>
    <name type="common">Caulobacter crescentus</name>
    <dbReference type="NCBI Taxonomy" id="565050"/>
    <lineage>
        <taxon>Bacteria</taxon>
        <taxon>Pseudomonadati</taxon>
        <taxon>Pseudomonadota</taxon>
        <taxon>Alphaproteobacteria</taxon>
        <taxon>Caulobacterales</taxon>
        <taxon>Caulobacteraceae</taxon>
        <taxon>Caulobacter</taxon>
    </lineage>
</organism>